<protein>
    <recommendedName>
        <fullName>Alcohol dehydrogenase</fullName>
        <ecNumber>1.1.1.1</ecNumber>
    </recommendedName>
</protein>
<dbReference type="EC" id="1.1.1.1"/>
<dbReference type="EMBL" id="U26838">
    <property type="protein sequence ID" value="AAB02624.1"/>
    <property type="molecule type" value="Genomic_DNA"/>
</dbReference>
<dbReference type="SMR" id="P48585"/>
<dbReference type="GO" id="GO:0005737">
    <property type="term" value="C:cytoplasm"/>
    <property type="evidence" value="ECO:0007669"/>
    <property type="project" value="TreeGrafter"/>
</dbReference>
<dbReference type="GO" id="GO:0004022">
    <property type="term" value="F:alcohol dehydrogenase (NAD+) activity"/>
    <property type="evidence" value="ECO:0000250"/>
    <property type="project" value="UniProtKB"/>
</dbReference>
<dbReference type="GO" id="GO:0006066">
    <property type="term" value="P:alcohol metabolic process"/>
    <property type="evidence" value="ECO:0007669"/>
    <property type="project" value="InterPro"/>
</dbReference>
<dbReference type="CDD" id="cd05323">
    <property type="entry name" value="ADH_SDR_c_like"/>
    <property type="match status" value="1"/>
</dbReference>
<dbReference type="FunFam" id="3.40.50.720:FF:000302">
    <property type="entry name" value="Alcohol dehydrogenase"/>
    <property type="match status" value="1"/>
</dbReference>
<dbReference type="Gene3D" id="3.40.50.720">
    <property type="entry name" value="NAD(P)-binding Rossmann-like Domain"/>
    <property type="match status" value="1"/>
</dbReference>
<dbReference type="InterPro" id="IPR002425">
    <property type="entry name" value="ADH_Drosophila-type"/>
</dbReference>
<dbReference type="InterPro" id="IPR036291">
    <property type="entry name" value="NAD(P)-bd_dom_sf"/>
</dbReference>
<dbReference type="InterPro" id="IPR020904">
    <property type="entry name" value="Sc_DH/Rdtase_CS"/>
</dbReference>
<dbReference type="InterPro" id="IPR002347">
    <property type="entry name" value="SDR_fam"/>
</dbReference>
<dbReference type="PANTHER" id="PTHR44229">
    <property type="entry name" value="15-HYDROXYPROSTAGLANDIN DEHYDROGENASE [NAD(+)]"/>
    <property type="match status" value="1"/>
</dbReference>
<dbReference type="PANTHER" id="PTHR44229:SF8">
    <property type="entry name" value="ALCOHOL DEHYDROGENASE-RELATED"/>
    <property type="match status" value="1"/>
</dbReference>
<dbReference type="Pfam" id="PF00106">
    <property type="entry name" value="adh_short"/>
    <property type="match status" value="1"/>
</dbReference>
<dbReference type="PRINTS" id="PR01168">
    <property type="entry name" value="ALCDHDRGNASE"/>
</dbReference>
<dbReference type="PRINTS" id="PR01167">
    <property type="entry name" value="INSADHFAMILY"/>
</dbReference>
<dbReference type="PRINTS" id="PR00080">
    <property type="entry name" value="SDRFAMILY"/>
</dbReference>
<dbReference type="SUPFAM" id="SSF51735">
    <property type="entry name" value="NAD(P)-binding Rossmann-fold domains"/>
    <property type="match status" value="1"/>
</dbReference>
<dbReference type="PROSITE" id="PS00061">
    <property type="entry name" value="ADH_SHORT"/>
    <property type="match status" value="1"/>
</dbReference>
<organism>
    <name type="scientific">Drosophila flavomontana</name>
    <name type="common">Fruit fly</name>
    <dbReference type="NCBI Taxonomy" id="40367"/>
    <lineage>
        <taxon>Eukaryota</taxon>
        <taxon>Metazoa</taxon>
        <taxon>Ecdysozoa</taxon>
        <taxon>Arthropoda</taxon>
        <taxon>Hexapoda</taxon>
        <taxon>Insecta</taxon>
        <taxon>Pterygota</taxon>
        <taxon>Neoptera</taxon>
        <taxon>Endopterygota</taxon>
        <taxon>Diptera</taxon>
        <taxon>Brachycera</taxon>
        <taxon>Muscomorpha</taxon>
        <taxon>Ephydroidea</taxon>
        <taxon>Drosophilidae</taxon>
        <taxon>Drosophila</taxon>
    </lineage>
</organism>
<evidence type="ECO:0000250" key="1"/>
<evidence type="ECO:0000255" key="2">
    <source>
        <dbReference type="PROSITE-ProRule" id="PRU10001"/>
    </source>
</evidence>
<evidence type="ECO:0000305" key="3"/>
<name>ADH_DROFL</name>
<keyword id="KW-0520">NAD</keyword>
<keyword id="KW-0560">Oxidoreductase</keyword>
<proteinExistence type="inferred from homology"/>
<reference key="1">
    <citation type="journal article" date="1996" name="Mol. Biol. Evol.">
        <title>Molecular phylogeny and genome evolution in the Drosophila virilis species group: duplications of the alcohol dehydrogenase gene.</title>
        <authorList>
            <person name="Nurminsky D.I."/>
            <person name="Moriyama E.N."/>
            <person name="Lozovskaya E.R."/>
            <person name="Hartl D.L."/>
        </authorList>
    </citation>
    <scope>NUCLEOTIDE SEQUENCE [GENOMIC DNA]</scope>
</reference>
<comment type="catalytic activity">
    <reaction evidence="2">
        <text>a primary alcohol + NAD(+) = an aldehyde + NADH + H(+)</text>
        <dbReference type="Rhea" id="RHEA:10736"/>
        <dbReference type="ChEBI" id="CHEBI:15378"/>
        <dbReference type="ChEBI" id="CHEBI:15734"/>
        <dbReference type="ChEBI" id="CHEBI:17478"/>
        <dbReference type="ChEBI" id="CHEBI:57540"/>
        <dbReference type="ChEBI" id="CHEBI:57945"/>
        <dbReference type="EC" id="1.1.1.1"/>
    </reaction>
</comment>
<comment type="catalytic activity">
    <reaction evidence="2">
        <text>a secondary alcohol + NAD(+) = a ketone + NADH + H(+)</text>
        <dbReference type="Rhea" id="RHEA:10740"/>
        <dbReference type="ChEBI" id="CHEBI:15378"/>
        <dbReference type="ChEBI" id="CHEBI:17087"/>
        <dbReference type="ChEBI" id="CHEBI:35681"/>
        <dbReference type="ChEBI" id="CHEBI:57540"/>
        <dbReference type="ChEBI" id="CHEBI:57945"/>
        <dbReference type="EC" id="1.1.1.1"/>
    </reaction>
</comment>
<comment type="subunit">
    <text>Homodimer.</text>
</comment>
<comment type="similarity">
    <text evidence="3">Belongs to the short-chain dehydrogenases/reductases (SDR) family.</text>
</comment>
<feature type="initiator methionine" description="Removed" evidence="1">
    <location>
        <position position="1"/>
    </location>
</feature>
<feature type="chain" id="PRO_0000054461" description="Alcohol dehydrogenase">
    <location>
        <begin position="2"/>
        <end position="254"/>
    </location>
</feature>
<feature type="active site" description="Proton acceptor" evidence="2">
    <location>
        <position position="151"/>
    </location>
</feature>
<feature type="binding site" evidence="1">
    <location>
        <begin position="10"/>
        <end position="33"/>
    </location>
    <ligand>
        <name>NAD(+)</name>
        <dbReference type="ChEBI" id="CHEBI:57540"/>
    </ligand>
</feature>
<feature type="binding site" evidence="1">
    <location>
        <position position="138"/>
    </location>
    <ligand>
        <name>substrate</name>
    </ligand>
</feature>
<sequence>MAIANKNIIFVAGLGGIGLDTSREIVKSGPKNLVILDRIDNPTAIAELKAINPKVTVTFYPYDVTVPVAETTKLLKTIFAQLKTVDLLINGAGILDDHQIERTIAVNFTGTVNTTTAIMEFWDKRKGGPGGVIANICSVTGFNAIYQVPVYSASKAAALSFTNSLARLAPITGVTAYSINPGITRTPLVHRFNSWLDVEPRVGELLLEHPTQTTLECAQNFVKAIEANKNGAIWQLDLGQLIAVEWTKHWDSHI</sequence>
<accession>P48585</accession>
<gene>
    <name type="primary">Adh</name>
</gene>